<reference key="1">
    <citation type="submission" date="1996-09" db="EMBL/GenBank/DDBJ databases">
        <authorList>
            <person name="Marra M."/>
            <person name="Hillier L."/>
            <person name="Allen M."/>
            <person name="Bowles M."/>
            <person name="Dietrich N."/>
            <person name="Dubuque T."/>
            <person name="Geisel S."/>
            <person name="Kucaba T."/>
            <person name="Lacy M."/>
            <person name="Le M."/>
            <person name="Martin J."/>
            <person name="Morris M."/>
            <person name="Schellenberg K."/>
            <person name="Steptoe M."/>
            <person name="Tan F."/>
            <person name="Underwood K."/>
            <person name="Moore B."/>
            <person name="Theising B."/>
            <person name="Wylie T."/>
            <person name="Lennon G."/>
            <person name="Soares B."/>
            <person name="Wilson R."/>
            <person name="Waterston R."/>
        </authorList>
    </citation>
    <scope>NUCLEOTIDE SEQUENCE [MRNA]</scope>
</reference>
<reference key="2">
    <citation type="journal article" date="2005" name="Science">
        <title>The transcriptional landscape of the mammalian genome.</title>
        <authorList>
            <person name="Carninci P."/>
            <person name="Kasukawa T."/>
            <person name="Katayama S."/>
            <person name="Gough J."/>
            <person name="Frith M.C."/>
            <person name="Maeda N."/>
            <person name="Oyama R."/>
            <person name="Ravasi T."/>
            <person name="Lenhard B."/>
            <person name="Wells C."/>
            <person name="Kodzius R."/>
            <person name="Shimokawa K."/>
            <person name="Bajic V.B."/>
            <person name="Brenner S.E."/>
            <person name="Batalov S."/>
            <person name="Forrest A.R."/>
            <person name="Zavolan M."/>
            <person name="Davis M.J."/>
            <person name="Wilming L.G."/>
            <person name="Aidinis V."/>
            <person name="Allen J.E."/>
            <person name="Ambesi-Impiombato A."/>
            <person name="Apweiler R."/>
            <person name="Aturaliya R.N."/>
            <person name="Bailey T.L."/>
            <person name="Bansal M."/>
            <person name="Baxter L."/>
            <person name="Beisel K.W."/>
            <person name="Bersano T."/>
            <person name="Bono H."/>
            <person name="Chalk A.M."/>
            <person name="Chiu K.P."/>
            <person name="Choudhary V."/>
            <person name="Christoffels A."/>
            <person name="Clutterbuck D.R."/>
            <person name="Crowe M.L."/>
            <person name="Dalla E."/>
            <person name="Dalrymple B.P."/>
            <person name="de Bono B."/>
            <person name="Della Gatta G."/>
            <person name="di Bernardo D."/>
            <person name="Down T."/>
            <person name="Engstrom P."/>
            <person name="Fagiolini M."/>
            <person name="Faulkner G."/>
            <person name="Fletcher C.F."/>
            <person name="Fukushima T."/>
            <person name="Furuno M."/>
            <person name="Futaki S."/>
            <person name="Gariboldi M."/>
            <person name="Georgii-Hemming P."/>
            <person name="Gingeras T.R."/>
            <person name="Gojobori T."/>
            <person name="Green R.E."/>
            <person name="Gustincich S."/>
            <person name="Harbers M."/>
            <person name="Hayashi Y."/>
            <person name="Hensch T.K."/>
            <person name="Hirokawa N."/>
            <person name="Hill D."/>
            <person name="Huminiecki L."/>
            <person name="Iacono M."/>
            <person name="Ikeo K."/>
            <person name="Iwama A."/>
            <person name="Ishikawa T."/>
            <person name="Jakt M."/>
            <person name="Kanapin A."/>
            <person name="Katoh M."/>
            <person name="Kawasawa Y."/>
            <person name="Kelso J."/>
            <person name="Kitamura H."/>
            <person name="Kitano H."/>
            <person name="Kollias G."/>
            <person name="Krishnan S.P."/>
            <person name="Kruger A."/>
            <person name="Kummerfeld S.K."/>
            <person name="Kurochkin I.V."/>
            <person name="Lareau L.F."/>
            <person name="Lazarevic D."/>
            <person name="Lipovich L."/>
            <person name="Liu J."/>
            <person name="Liuni S."/>
            <person name="McWilliam S."/>
            <person name="Madan Babu M."/>
            <person name="Madera M."/>
            <person name="Marchionni L."/>
            <person name="Matsuda H."/>
            <person name="Matsuzawa S."/>
            <person name="Miki H."/>
            <person name="Mignone F."/>
            <person name="Miyake S."/>
            <person name="Morris K."/>
            <person name="Mottagui-Tabar S."/>
            <person name="Mulder N."/>
            <person name="Nakano N."/>
            <person name="Nakauchi H."/>
            <person name="Ng P."/>
            <person name="Nilsson R."/>
            <person name="Nishiguchi S."/>
            <person name="Nishikawa S."/>
            <person name="Nori F."/>
            <person name="Ohara O."/>
            <person name="Okazaki Y."/>
            <person name="Orlando V."/>
            <person name="Pang K.C."/>
            <person name="Pavan W.J."/>
            <person name="Pavesi G."/>
            <person name="Pesole G."/>
            <person name="Petrovsky N."/>
            <person name="Piazza S."/>
            <person name="Reed J."/>
            <person name="Reid J.F."/>
            <person name="Ring B.Z."/>
            <person name="Ringwald M."/>
            <person name="Rost B."/>
            <person name="Ruan Y."/>
            <person name="Salzberg S.L."/>
            <person name="Sandelin A."/>
            <person name="Schneider C."/>
            <person name="Schoenbach C."/>
            <person name="Sekiguchi K."/>
            <person name="Semple C.A."/>
            <person name="Seno S."/>
            <person name="Sessa L."/>
            <person name="Sheng Y."/>
            <person name="Shibata Y."/>
            <person name="Shimada H."/>
            <person name="Shimada K."/>
            <person name="Silva D."/>
            <person name="Sinclair B."/>
            <person name="Sperling S."/>
            <person name="Stupka E."/>
            <person name="Sugiura K."/>
            <person name="Sultana R."/>
            <person name="Takenaka Y."/>
            <person name="Taki K."/>
            <person name="Tammoja K."/>
            <person name="Tan S.L."/>
            <person name="Tang S."/>
            <person name="Taylor M.S."/>
            <person name="Tegner J."/>
            <person name="Teichmann S.A."/>
            <person name="Ueda H.R."/>
            <person name="van Nimwegen E."/>
            <person name="Verardo R."/>
            <person name="Wei C.L."/>
            <person name="Yagi K."/>
            <person name="Yamanishi H."/>
            <person name="Zabarovsky E."/>
            <person name="Zhu S."/>
            <person name="Zimmer A."/>
            <person name="Hide W."/>
            <person name="Bult C."/>
            <person name="Grimmond S.M."/>
            <person name="Teasdale R.D."/>
            <person name="Liu E.T."/>
            <person name="Brusic V."/>
            <person name="Quackenbush J."/>
            <person name="Wahlestedt C."/>
            <person name="Mattick J.S."/>
            <person name="Hume D.A."/>
            <person name="Kai C."/>
            <person name="Sasaki D."/>
            <person name="Tomaru Y."/>
            <person name="Fukuda S."/>
            <person name="Kanamori-Katayama M."/>
            <person name="Suzuki M."/>
            <person name="Aoki J."/>
            <person name="Arakawa T."/>
            <person name="Iida J."/>
            <person name="Imamura K."/>
            <person name="Itoh M."/>
            <person name="Kato T."/>
            <person name="Kawaji H."/>
            <person name="Kawagashira N."/>
            <person name="Kawashima T."/>
            <person name="Kojima M."/>
            <person name="Kondo S."/>
            <person name="Konno H."/>
            <person name="Nakano K."/>
            <person name="Ninomiya N."/>
            <person name="Nishio T."/>
            <person name="Okada M."/>
            <person name="Plessy C."/>
            <person name="Shibata K."/>
            <person name="Shiraki T."/>
            <person name="Suzuki S."/>
            <person name="Tagami M."/>
            <person name="Waki K."/>
            <person name="Watahiki A."/>
            <person name="Okamura-Oho Y."/>
            <person name="Suzuki H."/>
            <person name="Kawai J."/>
            <person name="Hayashizaki Y."/>
        </authorList>
    </citation>
    <scope>NUCLEOTIDE SEQUENCE [LARGE SCALE MRNA]</scope>
    <source>
        <strain>C57BL/6J</strain>
        <tissue>Kidney</tissue>
    </source>
</reference>
<reference key="3">
    <citation type="journal article" date="2004" name="Genome Res.">
        <title>The status, quality, and expansion of the NIH full-length cDNA project: the Mammalian Gene Collection (MGC).</title>
        <authorList>
            <consortium name="The MGC Project Team"/>
        </authorList>
    </citation>
    <scope>NUCLEOTIDE SEQUENCE [LARGE SCALE MRNA]</scope>
    <source>
        <strain>FVB/N</strain>
        <tissue>Colon</tissue>
    </source>
</reference>
<reference key="4">
    <citation type="journal article" date="2010" name="Cell">
        <title>A tissue-specific atlas of mouse protein phosphorylation and expression.</title>
        <authorList>
            <person name="Huttlin E.L."/>
            <person name="Jedrychowski M.P."/>
            <person name="Elias J.E."/>
            <person name="Goswami T."/>
            <person name="Rad R."/>
            <person name="Beausoleil S.A."/>
            <person name="Villen J."/>
            <person name="Haas W."/>
            <person name="Sowa M.E."/>
            <person name="Gygi S.P."/>
        </authorList>
    </citation>
    <scope>IDENTIFICATION BY MASS SPECTROMETRY [LARGE SCALE ANALYSIS]</scope>
    <source>
        <tissue>Spleen</tissue>
    </source>
</reference>
<evidence type="ECO:0000250" key="1">
    <source>
        <dbReference type="UniProtKB" id="P33552"/>
    </source>
</evidence>
<evidence type="ECO:0000305" key="2"/>
<protein>
    <recommendedName>
        <fullName>Cyclin-dependent kinases regulatory subunit 2</fullName>
        <shortName>CKS-2</shortName>
    </recommendedName>
</protein>
<dbReference type="EMBL" id="AA289122">
    <property type="status" value="NOT_ANNOTATED_CDS"/>
    <property type="molecule type" value="mRNA"/>
</dbReference>
<dbReference type="EMBL" id="AA041913">
    <property type="status" value="NOT_ANNOTATED_CDS"/>
    <property type="molecule type" value="mRNA"/>
</dbReference>
<dbReference type="EMBL" id="AK002451">
    <property type="protein sequence ID" value="BAB22110.1"/>
    <property type="molecule type" value="mRNA"/>
</dbReference>
<dbReference type="EMBL" id="BC022647">
    <property type="protein sequence ID" value="AAH22647.1"/>
    <property type="molecule type" value="mRNA"/>
</dbReference>
<dbReference type="CCDS" id="CCDS36664.1"/>
<dbReference type="RefSeq" id="NP_079691.1">
    <property type="nucleotide sequence ID" value="NM_025415.3"/>
</dbReference>
<dbReference type="SMR" id="P56390"/>
<dbReference type="FunCoup" id="P56390">
    <property type="interactions" value="152"/>
</dbReference>
<dbReference type="STRING" id="10090.ENSMUSP00000075250"/>
<dbReference type="iPTMnet" id="P56390"/>
<dbReference type="PhosphoSitePlus" id="P56390"/>
<dbReference type="PaxDb" id="10090-ENSMUSP00000075250"/>
<dbReference type="PeptideAtlas" id="P56390"/>
<dbReference type="ProteomicsDB" id="279093"/>
<dbReference type="Pumba" id="P56390"/>
<dbReference type="Antibodypedia" id="27992">
    <property type="antibodies" value="242 antibodies from 33 providers"/>
</dbReference>
<dbReference type="DNASU" id="66197"/>
<dbReference type="Ensembl" id="ENSMUST00000075853.6">
    <property type="protein sequence ID" value="ENSMUSP00000075250.6"/>
    <property type="gene ID" value="ENSMUSG00000062248.6"/>
</dbReference>
<dbReference type="GeneID" id="66197"/>
<dbReference type="KEGG" id="mmu:66197"/>
<dbReference type="UCSC" id="uc007qmh.2">
    <property type="organism name" value="mouse"/>
</dbReference>
<dbReference type="AGR" id="MGI:1913447"/>
<dbReference type="CTD" id="1164"/>
<dbReference type="MGI" id="MGI:1913447">
    <property type="gene designation" value="Cks2"/>
</dbReference>
<dbReference type="VEuPathDB" id="HostDB:ENSMUSG00000062248"/>
<dbReference type="eggNOG" id="KOG3484">
    <property type="taxonomic scope" value="Eukaryota"/>
</dbReference>
<dbReference type="GeneTree" id="ENSGT00950000182971"/>
<dbReference type="HOGENOM" id="CLU_140546_2_0_1"/>
<dbReference type="InParanoid" id="P56390"/>
<dbReference type="OMA" id="MHEPEPH"/>
<dbReference type="OrthoDB" id="440676at2759"/>
<dbReference type="PhylomeDB" id="P56390"/>
<dbReference type="TreeFam" id="TF101142"/>
<dbReference type="BioGRID-ORCS" id="66197">
    <property type="hits" value="8 hits in 42 CRISPR screens"/>
</dbReference>
<dbReference type="ChiTaRS" id="Cks2">
    <property type="organism name" value="mouse"/>
</dbReference>
<dbReference type="PRO" id="PR:P56390"/>
<dbReference type="Proteomes" id="UP000000589">
    <property type="component" value="Chromosome 13"/>
</dbReference>
<dbReference type="RNAct" id="P56390">
    <property type="molecule type" value="protein"/>
</dbReference>
<dbReference type="Bgee" id="ENSMUSG00000062248">
    <property type="expression patterns" value="Expressed in blastoderm cell in morula and 69 other cell types or tissues"/>
</dbReference>
<dbReference type="ExpressionAtlas" id="P56390">
    <property type="expression patterns" value="baseline and differential"/>
</dbReference>
<dbReference type="GO" id="GO:0003682">
    <property type="term" value="F:chromatin binding"/>
    <property type="evidence" value="ECO:0000314"/>
    <property type="project" value="MGI"/>
</dbReference>
<dbReference type="GO" id="GO:0016538">
    <property type="term" value="F:cyclin-dependent protein serine/threonine kinase regulator activity"/>
    <property type="evidence" value="ECO:0007669"/>
    <property type="project" value="InterPro"/>
</dbReference>
<dbReference type="GO" id="GO:0051301">
    <property type="term" value="P:cell division"/>
    <property type="evidence" value="ECO:0007669"/>
    <property type="project" value="UniProtKB-KW"/>
</dbReference>
<dbReference type="GO" id="GO:0048144">
    <property type="term" value="P:fibroblast proliferation"/>
    <property type="evidence" value="ECO:0000316"/>
    <property type="project" value="MGI"/>
</dbReference>
<dbReference type="GO" id="GO:0007127">
    <property type="term" value="P:meiosis I"/>
    <property type="evidence" value="ECO:0000315"/>
    <property type="project" value="MGI"/>
</dbReference>
<dbReference type="GO" id="GO:0044772">
    <property type="term" value="P:mitotic cell cycle phase transition"/>
    <property type="evidence" value="ECO:0000316"/>
    <property type="project" value="MGI"/>
</dbReference>
<dbReference type="GO" id="GO:0006357">
    <property type="term" value="P:regulation of transcription by RNA polymerase II"/>
    <property type="evidence" value="ECO:0000316"/>
    <property type="project" value="MGI"/>
</dbReference>
<dbReference type="FunFam" id="3.30.170.10:FF:000001">
    <property type="entry name" value="Cyclin-dependent kinases regulatory subunit"/>
    <property type="match status" value="1"/>
</dbReference>
<dbReference type="Gene3D" id="3.30.170.10">
    <property type="entry name" value="Cyclin-dependent kinase, regulatory subunit"/>
    <property type="match status" value="1"/>
</dbReference>
<dbReference type="InterPro" id="IPR000789">
    <property type="entry name" value="Cyclin-dep_kinase_reg-sub"/>
</dbReference>
<dbReference type="InterPro" id="IPR036858">
    <property type="entry name" value="Cyclin-dep_kinase_reg-sub_sf"/>
</dbReference>
<dbReference type="PANTHER" id="PTHR23415">
    <property type="entry name" value="CYCLIN-DEPENDENT KINASES REGULATORY SUBUNIT/60S RIBOSOME SUBUNIT BIOGENESIS PROTEIN NIP7"/>
    <property type="match status" value="1"/>
</dbReference>
<dbReference type="Pfam" id="PF01111">
    <property type="entry name" value="CKS"/>
    <property type="match status" value="1"/>
</dbReference>
<dbReference type="PRINTS" id="PR00296">
    <property type="entry name" value="CYCLINKINASE"/>
</dbReference>
<dbReference type="SMART" id="SM01084">
    <property type="entry name" value="CKS"/>
    <property type="match status" value="1"/>
</dbReference>
<dbReference type="SUPFAM" id="SSF55637">
    <property type="entry name" value="Cell cycle regulatory proteins"/>
    <property type="match status" value="1"/>
</dbReference>
<dbReference type="PROSITE" id="PS00944">
    <property type="entry name" value="CKS_1"/>
    <property type="match status" value="1"/>
</dbReference>
<dbReference type="PROSITE" id="PS00945">
    <property type="entry name" value="CKS_2"/>
    <property type="match status" value="1"/>
</dbReference>
<accession>P56390</accession>
<organism>
    <name type="scientific">Mus musculus</name>
    <name type="common">Mouse</name>
    <dbReference type="NCBI Taxonomy" id="10090"/>
    <lineage>
        <taxon>Eukaryota</taxon>
        <taxon>Metazoa</taxon>
        <taxon>Chordata</taxon>
        <taxon>Craniata</taxon>
        <taxon>Vertebrata</taxon>
        <taxon>Euteleostomi</taxon>
        <taxon>Mammalia</taxon>
        <taxon>Eutheria</taxon>
        <taxon>Euarchontoglires</taxon>
        <taxon>Glires</taxon>
        <taxon>Rodentia</taxon>
        <taxon>Myomorpha</taxon>
        <taxon>Muroidea</taxon>
        <taxon>Muridae</taxon>
        <taxon>Murinae</taxon>
        <taxon>Mus</taxon>
        <taxon>Mus</taxon>
    </lineage>
</organism>
<comment type="function">
    <text>Binds to the catalytic subunit of the cyclin dependent kinases and is essential for their biological function.</text>
</comment>
<comment type="subunit">
    <text>Forms a homohexamer that can probably bind six kinase subunits.</text>
</comment>
<comment type="similarity">
    <text evidence="2">Belongs to the CKS family.</text>
</comment>
<feature type="chain" id="PRO_0000206238" description="Cyclin-dependent kinases regulatory subunit 2">
    <location>
        <begin position="1"/>
        <end position="79"/>
    </location>
</feature>
<feature type="modified residue" description="N6-acetyllysine" evidence="1">
    <location>
        <position position="4"/>
    </location>
</feature>
<gene>
    <name type="primary">Cks2</name>
</gene>
<name>CKS2_MOUSE</name>
<keyword id="KW-0007">Acetylation</keyword>
<keyword id="KW-0131">Cell cycle</keyword>
<keyword id="KW-0132">Cell division</keyword>
<keyword id="KW-1185">Reference proteome</keyword>
<sequence length="79" mass="9874">MAHKQIYYSDKYFDEHYEYRHVMLPRELSKQVPKTHLMSEEEWRRLGVQQSLGWVHYMIHEPEPHILLFRRPLPKEQQK</sequence>
<proteinExistence type="evidence at protein level"/>